<reference key="1">
    <citation type="journal article" date="2003" name="BMC Genomics">
        <title>TMC and EVER genes belong to a larger novel family, the TMC gene family encoding transmembrane proteins.</title>
        <authorList>
            <person name="Keresztes G."/>
            <person name="Mutai H."/>
            <person name="Heller S."/>
        </authorList>
    </citation>
    <scope>NUCLEOTIDE SEQUENCE [MRNA] (ISOFORM 3)</scope>
</reference>
<reference key="2">
    <citation type="journal article" date="2003" name="Genomics">
        <title>Characterization of the transmembrane channel-like (TMC) gene family: functional clues from hearing loss and epidermodysplasia verruciformis.</title>
        <authorList>
            <person name="Kurima K."/>
            <person name="Yang Y."/>
            <person name="Sorber K."/>
            <person name="Griffith A.J."/>
        </authorList>
    </citation>
    <scope>NUCLEOTIDE SEQUENCE [MRNA] (ISOFORM 3)</scope>
</reference>
<reference key="3">
    <citation type="journal article" date="2003" name="Genome Res.">
        <title>The secreted protein discovery initiative (SPDI), a large-scale effort to identify novel human secreted and transmembrane proteins: a bioinformatics assessment.</title>
        <authorList>
            <person name="Clark H.F."/>
            <person name="Gurney A.L."/>
            <person name="Abaya E."/>
            <person name="Baker K."/>
            <person name="Baldwin D.T."/>
            <person name="Brush J."/>
            <person name="Chen J."/>
            <person name="Chow B."/>
            <person name="Chui C."/>
            <person name="Crowley C."/>
            <person name="Currell B."/>
            <person name="Deuel B."/>
            <person name="Dowd P."/>
            <person name="Eaton D."/>
            <person name="Foster J.S."/>
            <person name="Grimaldi C."/>
            <person name="Gu Q."/>
            <person name="Hass P.E."/>
            <person name="Heldens S."/>
            <person name="Huang A."/>
            <person name="Kim H.S."/>
            <person name="Klimowski L."/>
            <person name="Jin Y."/>
            <person name="Johnson S."/>
            <person name="Lee J."/>
            <person name="Lewis L."/>
            <person name="Liao D."/>
            <person name="Mark M.R."/>
            <person name="Robbie E."/>
            <person name="Sanchez C."/>
            <person name="Schoenfeld J."/>
            <person name="Seshagiri S."/>
            <person name="Simmons L."/>
            <person name="Singh J."/>
            <person name="Smith V."/>
            <person name="Stinson J."/>
            <person name="Vagts A."/>
            <person name="Vandlen R.L."/>
            <person name="Watanabe C."/>
            <person name="Wieand D."/>
            <person name="Woods K."/>
            <person name="Xie M.-H."/>
            <person name="Yansura D.G."/>
            <person name="Yi S."/>
            <person name="Yu G."/>
            <person name="Yuan J."/>
            <person name="Zhang M."/>
            <person name="Zhang Z."/>
            <person name="Goddard A.D."/>
            <person name="Wood W.I."/>
            <person name="Godowski P.J."/>
            <person name="Gray A.M."/>
        </authorList>
    </citation>
    <scope>NUCLEOTIDE SEQUENCE [LARGE SCALE MRNA] (ISOFORM 2)</scope>
</reference>
<reference key="4">
    <citation type="journal article" date="2004" name="Nature">
        <title>The sequence and analysis of duplication-rich human chromosome 16.</title>
        <authorList>
            <person name="Martin J."/>
            <person name="Han C."/>
            <person name="Gordon L.A."/>
            <person name="Terry A."/>
            <person name="Prabhakar S."/>
            <person name="She X."/>
            <person name="Xie G."/>
            <person name="Hellsten U."/>
            <person name="Chan Y.M."/>
            <person name="Altherr M."/>
            <person name="Couronne O."/>
            <person name="Aerts A."/>
            <person name="Bajorek E."/>
            <person name="Black S."/>
            <person name="Blumer H."/>
            <person name="Branscomb E."/>
            <person name="Brown N.C."/>
            <person name="Bruno W.J."/>
            <person name="Buckingham J.M."/>
            <person name="Callen D.F."/>
            <person name="Campbell C.S."/>
            <person name="Campbell M.L."/>
            <person name="Campbell E.W."/>
            <person name="Caoile C."/>
            <person name="Challacombe J.F."/>
            <person name="Chasteen L.A."/>
            <person name="Chertkov O."/>
            <person name="Chi H.C."/>
            <person name="Christensen M."/>
            <person name="Clark L.M."/>
            <person name="Cohn J.D."/>
            <person name="Denys M."/>
            <person name="Detter J.C."/>
            <person name="Dickson M."/>
            <person name="Dimitrijevic-Bussod M."/>
            <person name="Escobar J."/>
            <person name="Fawcett J.J."/>
            <person name="Flowers D."/>
            <person name="Fotopulos D."/>
            <person name="Glavina T."/>
            <person name="Gomez M."/>
            <person name="Gonzales E."/>
            <person name="Goodstein D."/>
            <person name="Goodwin L.A."/>
            <person name="Grady D.L."/>
            <person name="Grigoriev I."/>
            <person name="Groza M."/>
            <person name="Hammon N."/>
            <person name="Hawkins T."/>
            <person name="Haydu L."/>
            <person name="Hildebrand C.E."/>
            <person name="Huang W."/>
            <person name="Israni S."/>
            <person name="Jett J."/>
            <person name="Jewett P.B."/>
            <person name="Kadner K."/>
            <person name="Kimball H."/>
            <person name="Kobayashi A."/>
            <person name="Krawczyk M.-C."/>
            <person name="Leyba T."/>
            <person name="Longmire J.L."/>
            <person name="Lopez F."/>
            <person name="Lou Y."/>
            <person name="Lowry S."/>
            <person name="Ludeman T."/>
            <person name="Manohar C.F."/>
            <person name="Mark G.A."/>
            <person name="McMurray K.L."/>
            <person name="Meincke L.J."/>
            <person name="Morgan J."/>
            <person name="Moyzis R.K."/>
            <person name="Mundt M.O."/>
            <person name="Munk A.C."/>
            <person name="Nandkeshwar R.D."/>
            <person name="Pitluck S."/>
            <person name="Pollard M."/>
            <person name="Predki P."/>
            <person name="Parson-Quintana B."/>
            <person name="Ramirez L."/>
            <person name="Rash S."/>
            <person name="Retterer J."/>
            <person name="Ricke D.O."/>
            <person name="Robinson D.L."/>
            <person name="Rodriguez A."/>
            <person name="Salamov A."/>
            <person name="Saunders E.H."/>
            <person name="Scott D."/>
            <person name="Shough T."/>
            <person name="Stallings R.L."/>
            <person name="Stalvey M."/>
            <person name="Sutherland R.D."/>
            <person name="Tapia R."/>
            <person name="Tesmer J.G."/>
            <person name="Thayer N."/>
            <person name="Thompson L.S."/>
            <person name="Tice H."/>
            <person name="Torney D.C."/>
            <person name="Tran-Gyamfi M."/>
            <person name="Tsai M."/>
            <person name="Ulanovsky L.E."/>
            <person name="Ustaszewska A."/>
            <person name="Vo N."/>
            <person name="White P.S."/>
            <person name="Williams A.L."/>
            <person name="Wills P.L."/>
            <person name="Wu J.-R."/>
            <person name="Wu K."/>
            <person name="Yang J."/>
            <person name="DeJong P."/>
            <person name="Bruce D."/>
            <person name="Doggett N.A."/>
            <person name="Deaven L."/>
            <person name="Schmutz J."/>
            <person name="Grimwood J."/>
            <person name="Richardson P."/>
            <person name="Rokhsar D.S."/>
            <person name="Eichler E.E."/>
            <person name="Gilna P."/>
            <person name="Lucas S.M."/>
            <person name="Myers R.M."/>
            <person name="Rubin E.M."/>
            <person name="Pennacchio L.A."/>
        </authorList>
    </citation>
    <scope>NUCLEOTIDE SEQUENCE [LARGE SCALE GENOMIC DNA]</scope>
</reference>
<reference key="5">
    <citation type="journal article" date="2004" name="Genome Res.">
        <title>The status, quality, and expansion of the NIH full-length cDNA project: the Mammalian Gene Collection (MGC).</title>
        <authorList>
            <consortium name="The MGC Project Team"/>
        </authorList>
    </citation>
    <scope>NUCLEOTIDE SEQUENCE [LARGE SCALE MRNA] (ISOFORMS 3 AND 4)</scope>
    <source>
        <tissue>Testis</tissue>
    </source>
</reference>
<reference key="6">
    <citation type="journal article" date="2007" name="BMC Genomics">
        <title>The full-ORF clone resource of the German cDNA consortium.</title>
        <authorList>
            <person name="Bechtel S."/>
            <person name="Rosenfelder H."/>
            <person name="Duda A."/>
            <person name="Schmidt C.P."/>
            <person name="Ernst U."/>
            <person name="Wellenreuther R."/>
            <person name="Mehrle A."/>
            <person name="Schuster C."/>
            <person name="Bahr A."/>
            <person name="Bloecker H."/>
            <person name="Heubner D."/>
            <person name="Hoerlein A."/>
            <person name="Michel G."/>
            <person name="Wedler H."/>
            <person name="Koehrer K."/>
            <person name="Ottenwaelder B."/>
            <person name="Poustka A."/>
            <person name="Wiemann S."/>
            <person name="Schupp I."/>
        </authorList>
    </citation>
    <scope>NUCLEOTIDE SEQUENCE [LARGE SCALE MRNA] OF 200-1006 (ISOFORM 1)</scope>
    <source>
        <tissue>Rectum tumor</tissue>
    </source>
</reference>
<reference key="7">
    <citation type="journal article" date="2004" name="Nat. Genet.">
        <title>Complete sequencing and characterization of 21,243 full-length human cDNAs.</title>
        <authorList>
            <person name="Ota T."/>
            <person name="Suzuki Y."/>
            <person name="Nishikawa T."/>
            <person name="Otsuki T."/>
            <person name="Sugiyama T."/>
            <person name="Irie R."/>
            <person name="Wakamatsu A."/>
            <person name="Hayashi K."/>
            <person name="Sato H."/>
            <person name="Nagai K."/>
            <person name="Kimura K."/>
            <person name="Makita H."/>
            <person name="Sekine M."/>
            <person name="Obayashi M."/>
            <person name="Nishi T."/>
            <person name="Shibahara T."/>
            <person name="Tanaka T."/>
            <person name="Ishii S."/>
            <person name="Yamamoto J."/>
            <person name="Saito K."/>
            <person name="Kawai Y."/>
            <person name="Isono Y."/>
            <person name="Nakamura Y."/>
            <person name="Nagahari K."/>
            <person name="Murakami K."/>
            <person name="Yasuda T."/>
            <person name="Iwayanagi T."/>
            <person name="Wagatsuma M."/>
            <person name="Shiratori A."/>
            <person name="Sudo H."/>
            <person name="Hosoiri T."/>
            <person name="Kaku Y."/>
            <person name="Kodaira H."/>
            <person name="Kondo H."/>
            <person name="Sugawara M."/>
            <person name="Takahashi M."/>
            <person name="Kanda K."/>
            <person name="Yokoi T."/>
            <person name="Furuya T."/>
            <person name="Kikkawa E."/>
            <person name="Omura Y."/>
            <person name="Abe K."/>
            <person name="Kamihara K."/>
            <person name="Katsuta N."/>
            <person name="Sato K."/>
            <person name="Tanikawa M."/>
            <person name="Yamazaki M."/>
            <person name="Ninomiya K."/>
            <person name="Ishibashi T."/>
            <person name="Yamashita H."/>
            <person name="Murakawa K."/>
            <person name="Fujimori K."/>
            <person name="Tanai H."/>
            <person name="Kimata M."/>
            <person name="Watanabe M."/>
            <person name="Hiraoka S."/>
            <person name="Chiba Y."/>
            <person name="Ishida S."/>
            <person name="Ono Y."/>
            <person name="Takiguchi S."/>
            <person name="Watanabe S."/>
            <person name="Yosida M."/>
            <person name="Hotuta T."/>
            <person name="Kusano J."/>
            <person name="Kanehori K."/>
            <person name="Takahashi-Fujii A."/>
            <person name="Hara H."/>
            <person name="Tanase T.-O."/>
            <person name="Nomura Y."/>
            <person name="Togiya S."/>
            <person name="Komai F."/>
            <person name="Hara R."/>
            <person name="Takeuchi K."/>
            <person name="Arita M."/>
            <person name="Imose N."/>
            <person name="Musashino K."/>
            <person name="Yuuki H."/>
            <person name="Oshima A."/>
            <person name="Sasaki N."/>
            <person name="Aotsuka S."/>
            <person name="Yoshikawa Y."/>
            <person name="Matsunawa H."/>
            <person name="Ichihara T."/>
            <person name="Shiohata N."/>
            <person name="Sano S."/>
            <person name="Moriya S."/>
            <person name="Momiyama H."/>
            <person name="Satoh N."/>
            <person name="Takami S."/>
            <person name="Terashima Y."/>
            <person name="Suzuki O."/>
            <person name="Nakagawa S."/>
            <person name="Senoh A."/>
            <person name="Mizoguchi H."/>
            <person name="Goto Y."/>
            <person name="Shimizu F."/>
            <person name="Wakebe H."/>
            <person name="Hishigaki H."/>
            <person name="Watanabe T."/>
            <person name="Sugiyama A."/>
            <person name="Takemoto M."/>
            <person name="Kawakami B."/>
            <person name="Yamazaki M."/>
            <person name="Watanabe K."/>
            <person name="Kumagai A."/>
            <person name="Itakura S."/>
            <person name="Fukuzumi Y."/>
            <person name="Fujimori Y."/>
            <person name="Komiyama M."/>
            <person name="Tashiro H."/>
            <person name="Tanigami A."/>
            <person name="Fujiwara T."/>
            <person name="Ono T."/>
            <person name="Yamada K."/>
            <person name="Fujii Y."/>
            <person name="Ozaki K."/>
            <person name="Hirao M."/>
            <person name="Ohmori Y."/>
            <person name="Kawabata A."/>
            <person name="Hikiji T."/>
            <person name="Kobatake N."/>
            <person name="Inagaki H."/>
            <person name="Ikema Y."/>
            <person name="Okamoto S."/>
            <person name="Okitani R."/>
            <person name="Kawakami T."/>
            <person name="Noguchi S."/>
            <person name="Itoh T."/>
            <person name="Shigeta K."/>
            <person name="Senba T."/>
            <person name="Matsumura K."/>
            <person name="Nakajima Y."/>
            <person name="Mizuno T."/>
            <person name="Morinaga M."/>
            <person name="Sasaki M."/>
            <person name="Togashi T."/>
            <person name="Oyama M."/>
            <person name="Hata H."/>
            <person name="Watanabe M."/>
            <person name="Komatsu T."/>
            <person name="Mizushima-Sugano J."/>
            <person name="Satoh T."/>
            <person name="Shirai Y."/>
            <person name="Takahashi Y."/>
            <person name="Nakagawa K."/>
            <person name="Okumura K."/>
            <person name="Nagase T."/>
            <person name="Nomura N."/>
            <person name="Kikuchi H."/>
            <person name="Masuho Y."/>
            <person name="Yamashita R."/>
            <person name="Nakai K."/>
            <person name="Yada T."/>
            <person name="Nakamura Y."/>
            <person name="Ohara O."/>
            <person name="Isogai T."/>
            <person name="Sugano S."/>
        </authorList>
    </citation>
    <scope>NUCLEOTIDE SEQUENCE [LARGE SCALE MRNA] OF 667-1006</scope>
    <source>
        <tissue>Placenta</tissue>
    </source>
</reference>
<accession>Q6UXY8</accession>
<accession>Q68DK8</accession>
<accession>Q8IY20</accession>
<accession>Q8NHV6</accession>
<accession>Q9H8I7</accession>
<feature type="chain" id="PRO_0000289966" description="Transmembrane channel-like protein 5">
    <location>
        <begin position="1"/>
        <end position="1006"/>
    </location>
</feature>
<feature type="topological domain" description="Extracellular" evidence="1">
    <location>
        <begin position="1"/>
        <end position="458"/>
    </location>
</feature>
<feature type="transmembrane region" description="Helical" evidence="1">
    <location>
        <begin position="459"/>
        <end position="479"/>
    </location>
</feature>
<feature type="topological domain" description="Cytoplasmic" evidence="1">
    <location>
        <begin position="480"/>
        <end position="485"/>
    </location>
</feature>
<feature type="transmembrane region" description="Helical" evidence="1">
    <location>
        <begin position="486"/>
        <end position="508"/>
    </location>
</feature>
<feature type="topological domain" description="Extracellular" evidence="1">
    <location>
        <begin position="509"/>
        <end position="525"/>
    </location>
</feature>
<feature type="transmembrane region" description="Helical" evidence="1">
    <location>
        <begin position="526"/>
        <end position="546"/>
    </location>
</feature>
<feature type="topological domain" description="Cytoplasmic" evidence="1">
    <location>
        <begin position="547"/>
        <end position="619"/>
    </location>
</feature>
<feature type="transmembrane region" description="Helical" evidence="1">
    <location>
        <begin position="620"/>
        <end position="640"/>
    </location>
</feature>
<feature type="topological domain" description="Extracellular" evidence="1">
    <location>
        <begin position="641"/>
        <end position="654"/>
    </location>
</feature>
<feature type="transmembrane region" description="Helical" evidence="1">
    <location>
        <begin position="655"/>
        <end position="675"/>
    </location>
</feature>
<feature type="topological domain" description="Cytoplasmic" evidence="1">
    <location>
        <begin position="676"/>
        <end position="698"/>
    </location>
</feature>
<feature type="transmembrane region" description="Helical" evidence="1">
    <location>
        <begin position="699"/>
        <end position="719"/>
    </location>
</feature>
<feature type="topological domain" description="Extracellular" evidence="1">
    <location>
        <begin position="720"/>
        <end position="732"/>
    </location>
</feature>
<feature type="transmembrane region" description="Helical" evidence="1">
    <location>
        <begin position="733"/>
        <end position="753"/>
    </location>
</feature>
<feature type="topological domain" description="Cytoplasmic" evidence="1">
    <location>
        <begin position="754"/>
        <end position="786"/>
    </location>
</feature>
<feature type="transmembrane region" description="Helical" evidence="1">
    <location>
        <begin position="787"/>
        <end position="807"/>
    </location>
</feature>
<feature type="topological domain" description="Extracellular" evidence="1">
    <location>
        <begin position="808"/>
        <end position="835"/>
    </location>
</feature>
<feature type="transmembrane region" description="Helical" evidence="1">
    <location>
        <begin position="836"/>
        <end position="856"/>
    </location>
</feature>
<feature type="topological domain" description="Cytoplasmic" evidence="1">
    <location>
        <begin position="857"/>
        <end position="900"/>
    </location>
</feature>
<feature type="transmembrane region" description="Helical" evidence="1">
    <location>
        <begin position="901"/>
        <end position="921"/>
    </location>
</feature>
<feature type="topological domain" description="Extracellular" evidence="1">
    <location>
        <begin position="922"/>
        <end position="1006"/>
    </location>
</feature>
<feature type="region of interest" description="Disordered" evidence="2">
    <location>
        <begin position="1"/>
        <end position="289"/>
    </location>
</feature>
<feature type="compositionally biased region" description="Polar residues" evidence="2">
    <location>
        <begin position="20"/>
        <end position="30"/>
    </location>
</feature>
<feature type="compositionally biased region" description="Polar residues" evidence="2">
    <location>
        <begin position="50"/>
        <end position="59"/>
    </location>
</feature>
<feature type="compositionally biased region" description="Polar residues" evidence="2">
    <location>
        <begin position="76"/>
        <end position="101"/>
    </location>
</feature>
<feature type="compositionally biased region" description="Low complexity" evidence="2">
    <location>
        <begin position="138"/>
        <end position="149"/>
    </location>
</feature>
<feature type="compositionally biased region" description="Basic and acidic residues" evidence="2">
    <location>
        <begin position="239"/>
        <end position="250"/>
    </location>
</feature>
<feature type="splice variant" id="VSP_026043" description="In isoform 4." evidence="6">
    <location>
        <begin position="1"/>
        <end position="359"/>
    </location>
</feature>
<feature type="splice variant" id="VSP_026044" description="In isoform 3." evidence="3 4 6">
    <location>
        <begin position="1"/>
        <end position="246"/>
    </location>
</feature>
<feature type="splice variant" id="VSP_026045" description="In isoform 3." evidence="3 4 6">
    <original>ENGHDYGSSETPKMTRGVLSRTSSIQPSFRHRSDDPVGSLWGENDYPEGIEMASMEMANSYGHSLPGAPGSGYVNPAYVGESGPVHAYGNPPLSECDWHKSP</original>
    <variation>MLSDDHVNEIIIQVENVSSGVQSHPSSNQIFQEKVLLDSSINMVLSISDIDVIDSQTVSKRNDQKGNQVLRFSTSLNESMSQTLHSLECMGIDTPGSSHETV</variation>
    <location>
        <begin position="247"/>
        <end position="348"/>
    </location>
</feature>
<feature type="splice variant" id="VSP_026046" description="In isoform 2." evidence="5">
    <location>
        <begin position="859"/>
        <end position="916"/>
    </location>
</feature>
<feature type="sequence variant" id="VAR_057285" description="In dbSNP:rs16972013.">
    <original>S</original>
    <variation>N</variation>
    <location>
        <position position="328"/>
    </location>
</feature>
<feature type="sequence variant" id="VAR_061850" description="In dbSNP:rs36019638.">
    <original>A</original>
    <variation>T</variation>
    <location>
        <position position="355"/>
    </location>
</feature>
<feature type="sequence conflict" description="In Ref. 5; CAH18212." evidence="7" ref="5">
    <original>N</original>
    <variation>D</variation>
    <location>
        <position position="419"/>
    </location>
</feature>
<feature type="sequence conflict" description="In Ref. 5; AAH38118." evidence="7" ref="5">
    <original>M</original>
    <variation>T</variation>
    <location>
        <position position="547"/>
    </location>
</feature>
<dbReference type="EMBL" id="AY263164">
    <property type="protein sequence ID" value="AAP78779.1"/>
    <property type="molecule type" value="mRNA"/>
</dbReference>
<dbReference type="EMBL" id="AY236494">
    <property type="protein sequence ID" value="AAP69872.1"/>
    <property type="molecule type" value="mRNA"/>
</dbReference>
<dbReference type="EMBL" id="AY358155">
    <property type="protein sequence ID" value="AAQ88522.1"/>
    <property type="molecule type" value="mRNA"/>
</dbReference>
<dbReference type="EMBL" id="AC130456">
    <property type="status" value="NOT_ANNOTATED_CDS"/>
    <property type="molecule type" value="Genomic_DNA"/>
</dbReference>
<dbReference type="EMBL" id="BC027602">
    <property type="protein sequence ID" value="AAH27602.1"/>
    <property type="molecule type" value="mRNA"/>
</dbReference>
<dbReference type="EMBL" id="BC038118">
    <property type="protein sequence ID" value="AAH38118.1"/>
    <property type="molecule type" value="mRNA"/>
</dbReference>
<dbReference type="EMBL" id="CR749359">
    <property type="protein sequence ID" value="CAH18212.1"/>
    <property type="molecule type" value="mRNA"/>
</dbReference>
<dbReference type="EMBL" id="AK023655">
    <property type="protein sequence ID" value="BAB14629.1"/>
    <property type="status" value="ALT_INIT"/>
    <property type="molecule type" value="mRNA"/>
</dbReference>
<dbReference type="CCDS" id="CCDS10577.1">
    <molecule id="Q6UXY8-3"/>
</dbReference>
<dbReference type="CCDS" id="CCDS42126.1">
    <molecule id="Q6UXY8-2"/>
</dbReference>
<dbReference type="CCDS" id="CCDS45431.1">
    <molecule id="Q6UXY8-1"/>
</dbReference>
<dbReference type="RefSeq" id="NP_001098718.1">
    <molecule id="Q6UXY8-1"/>
    <property type="nucleotide sequence ID" value="NM_001105248.1"/>
</dbReference>
<dbReference type="RefSeq" id="NP_001098719.1">
    <molecule id="Q6UXY8-2"/>
    <property type="nucleotide sequence ID" value="NM_001105249.1"/>
</dbReference>
<dbReference type="RefSeq" id="NP_001248770.1">
    <molecule id="Q6UXY8-1"/>
    <property type="nucleotide sequence ID" value="NM_001261841.2"/>
</dbReference>
<dbReference type="RefSeq" id="NP_001295090.1">
    <property type="nucleotide sequence ID" value="NM_001308161.1"/>
</dbReference>
<dbReference type="RefSeq" id="NP_079056.2">
    <molecule id="Q6UXY8-3"/>
    <property type="nucleotide sequence ID" value="NM_024780.4"/>
</dbReference>
<dbReference type="SMR" id="Q6UXY8"/>
<dbReference type="BioGRID" id="122929">
    <property type="interactions" value="59"/>
</dbReference>
<dbReference type="FunCoup" id="Q6UXY8">
    <property type="interactions" value="84"/>
</dbReference>
<dbReference type="IntAct" id="Q6UXY8">
    <property type="interactions" value="2"/>
</dbReference>
<dbReference type="STRING" id="9606.ENSP00000379531"/>
<dbReference type="TCDB" id="1.A.17.4.16">
    <property type="family name" value="the calcium-dependent chloride channel (ca-clc) family"/>
</dbReference>
<dbReference type="GlyGen" id="Q6UXY8">
    <property type="glycosylation" value="1 site, 1 O-linked glycan (1 site)"/>
</dbReference>
<dbReference type="iPTMnet" id="Q6UXY8"/>
<dbReference type="PhosphoSitePlus" id="Q6UXY8"/>
<dbReference type="SwissPalm" id="Q6UXY8"/>
<dbReference type="BioMuta" id="TMC5"/>
<dbReference type="DMDM" id="313104276"/>
<dbReference type="jPOST" id="Q6UXY8"/>
<dbReference type="MassIVE" id="Q6UXY8"/>
<dbReference type="PaxDb" id="9606-ENSP00000379531"/>
<dbReference type="PeptideAtlas" id="Q6UXY8"/>
<dbReference type="ProteomicsDB" id="67677">
    <molecule id="Q6UXY8-1"/>
</dbReference>
<dbReference type="ProteomicsDB" id="67678">
    <molecule id="Q6UXY8-2"/>
</dbReference>
<dbReference type="ProteomicsDB" id="67679">
    <molecule id="Q6UXY8-3"/>
</dbReference>
<dbReference type="ProteomicsDB" id="67680">
    <molecule id="Q6UXY8-4"/>
</dbReference>
<dbReference type="Antibodypedia" id="25361">
    <property type="antibodies" value="81 antibodies from 16 providers"/>
</dbReference>
<dbReference type="DNASU" id="79838"/>
<dbReference type="Ensembl" id="ENST00000219821.9">
    <molecule id="Q6UXY8-3"/>
    <property type="protein sequence ID" value="ENSP00000219821.5"/>
    <property type="gene ID" value="ENSG00000103534.17"/>
</dbReference>
<dbReference type="Ensembl" id="ENST00000381414.8">
    <molecule id="Q6UXY8-2"/>
    <property type="protein sequence ID" value="ENSP00000370822.4"/>
    <property type="gene ID" value="ENSG00000103534.17"/>
</dbReference>
<dbReference type="Ensembl" id="ENST00000396229.6">
    <molecule id="Q6UXY8-1"/>
    <property type="protein sequence ID" value="ENSP00000379531.2"/>
    <property type="gene ID" value="ENSG00000103534.17"/>
</dbReference>
<dbReference type="Ensembl" id="ENST00000542583.7">
    <molecule id="Q6UXY8-1"/>
    <property type="protein sequence ID" value="ENSP00000446274.2"/>
    <property type="gene ID" value="ENSG00000103534.17"/>
</dbReference>
<dbReference type="Ensembl" id="ENST00000561503.5">
    <molecule id="Q6UXY8-4"/>
    <property type="protein sequence ID" value="ENSP00000456148.1"/>
    <property type="gene ID" value="ENSG00000103534.17"/>
</dbReference>
<dbReference type="GeneID" id="79838"/>
<dbReference type="KEGG" id="hsa:79838"/>
<dbReference type="MANE-Select" id="ENST00000542583.7">
    <property type="protein sequence ID" value="ENSP00000446274.2"/>
    <property type="RefSeq nucleotide sequence ID" value="NM_001261841.2"/>
    <property type="RefSeq protein sequence ID" value="NP_001248770.1"/>
</dbReference>
<dbReference type="UCSC" id="uc002dgb.5">
    <molecule id="Q6UXY8-1"/>
    <property type="organism name" value="human"/>
</dbReference>
<dbReference type="AGR" id="HGNC:22999"/>
<dbReference type="CTD" id="79838"/>
<dbReference type="DisGeNET" id="79838"/>
<dbReference type="GeneCards" id="TMC5"/>
<dbReference type="HGNC" id="HGNC:22999">
    <property type="gene designation" value="TMC5"/>
</dbReference>
<dbReference type="HPA" id="ENSG00000103534">
    <property type="expression patterns" value="Tissue enhanced (intestine, stomach)"/>
</dbReference>
<dbReference type="neXtProt" id="NX_Q6UXY8"/>
<dbReference type="OpenTargets" id="ENSG00000103534"/>
<dbReference type="PharmGKB" id="PA134923498"/>
<dbReference type="VEuPathDB" id="HostDB:ENSG00000103534"/>
<dbReference type="eggNOG" id="ENOG502QQB2">
    <property type="taxonomic scope" value="Eukaryota"/>
</dbReference>
<dbReference type="GeneTree" id="ENSGT01050000244894"/>
<dbReference type="HOGENOM" id="CLU_013958_0_2_1"/>
<dbReference type="InParanoid" id="Q6UXY8"/>
<dbReference type="OMA" id="SLPHAYF"/>
<dbReference type="OrthoDB" id="1936208at2759"/>
<dbReference type="PAN-GO" id="Q6UXY8">
    <property type="GO annotations" value="1 GO annotation based on evolutionary models"/>
</dbReference>
<dbReference type="PhylomeDB" id="Q6UXY8"/>
<dbReference type="TreeFam" id="TF313462"/>
<dbReference type="PathwayCommons" id="Q6UXY8"/>
<dbReference type="SignaLink" id="Q6UXY8"/>
<dbReference type="BioGRID-ORCS" id="79838">
    <property type="hits" value="10 hits in 1145 CRISPR screens"/>
</dbReference>
<dbReference type="ChiTaRS" id="TMC5">
    <property type="organism name" value="human"/>
</dbReference>
<dbReference type="GenomeRNAi" id="79838"/>
<dbReference type="Pharos" id="Q6UXY8">
    <property type="development level" value="Tbio"/>
</dbReference>
<dbReference type="PRO" id="PR:Q6UXY8"/>
<dbReference type="Proteomes" id="UP000005640">
    <property type="component" value="Chromosome 16"/>
</dbReference>
<dbReference type="RNAct" id="Q6UXY8">
    <property type="molecule type" value="protein"/>
</dbReference>
<dbReference type="Bgee" id="ENSG00000103534">
    <property type="expression patterns" value="Expressed in pancreatic ductal cell and 160 other cell types or tissues"/>
</dbReference>
<dbReference type="ExpressionAtlas" id="Q6UXY8">
    <property type="expression patterns" value="baseline and differential"/>
</dbReference>
<dbReference type="GO" id="GO:0070062">
    <property type="term" value="C:extracellular exosome"/>
    <property type="evidence" value="ECO:0007005"/>
    <property type="project" value="UniProtKB"/>
</dbReference>
<dbReference type="GO" id="GO:0005886">
    <property type="term" value="C:plasma membrane"/>
    <property type="evidence" value="ECO:0007669"/>
    <property type="project" value="InterPro"/>
</dbReference>
<dbReference type="GO" id="GO:0008381">
    <property type="term" value="F:mechanosensitive monoatomic ion channel activity"/>
    <property type="evidence" value="ECO:0000318"/>
    <property type="project" value="GO_Central"/>
</dbReference>
<dbReference type="InterPro" id="IPR038900">
    <property type="entry name" value="TMC"/>
</dbReference>
<dbReference type="InterPro" id="IPR012496">
    <property type="entry name" value="TMC_dom"/>
</dbReference>
<dbReference type="PANTHER" id="PTHR23302:SF5">
    <property type="entry name" value="TRANSMEMBRANE CHANNEL-LIKE PROTEIN 5"/>
    <property type="match status" value="1"/>
</dbReference>
<dbReference type="PANTHER" id="PTHR23302">
    <property type="entry name" value="TRANSMEMBRANE CHANNEL-RELATED"/>
    <property type="match status" value="1"/>
</dbReference>
<dbReference type="Pfam" id="PF07810">
    <property type="entry name" value="TMC"/>
    <property type="match status" value="1"/>
</dbReference>
<gene>
    <name evidence="8" type="primary">TMC5</name>
    <name type="ORF">UNQ8238/PRO33604</name>
</gene>
<comment type="function">
    <text evidence="7">Probable component of an ion channel (Probable). Molecular function hasn't been characterized yet (Probable).</text>
</comment>
<comment type="subcellular location">
    <subcellularLocation>
        <location evidence="7">Membrane</location>
        <topology evidence="7">Multi-pass membrane protein</topology>
    </subcellularLocation>
</comment>
<comment type="alternative products">
    <event type="alternative splicing"/>
    <isoform>
        <id>Q6UXY8-1</id>
        <name>1</name>
        <sequence type="displayed"/>
    </isoform>
    <isoform>
        <id>Q6UXY8-2</id>
        <name>2</name>
        <sequence type="described" ref="VSP_026046"/>
    </isoform>
    <isoform>
        <id>Q6UXY8-3</id>
        <name>3</name>
        <sequence type="described" ref="VSP_026044 VSP_026045"/>
    </isoform>
    <isoform>
        <id>Q6UXY8-4</id>
        <name>4</name>
        <sequence type="described" ref="VSP_026043"/>
    </isoform>
</comment>
<comment type="similarity">
    <text evidence="7">Belongs to the TMC family.</text>
</comment>
<comment type="sequence caution" evidence="7">
    <conflict type="erroneous initiation">
        <sequence resource="EMBL-CDS" id="BAB14629"/>
    </conflict>
    <text>Truncated N-terminus.</text>
</comment>
<organism>
    <name type="scientific">Homo sapiens</name>
    <name type="common">Human</name>
    <dbReference type="NCBI Taxonomy" id="9606"/>
    <lineage>
        <taxon>Eukaryota</taxon>
        <taxon>Metazoa</taxon>
        <taxon>Chordata</taxon>
        <taxon>Craniata</taxon>
        <taxon>Vertebrata</taxon>
        <taxon>Euteleostomi</taxon>
        <taxon>Mammalia</taxon>
        <taxon>Eutheria</taxon>
        <taxon>Euarchontoglires</taxon>
        <taxon>Primates</taxon>
        <taxon>Haplorrhini</taxon>
        <taxon>Catarrhini</taxon>
        <taxon>Hominidae</taxon>
        <taxon>Homo</taxon>
    </lineage>
</organism>
<keyword id="KW-0025">Alternative splicing</keyword>
<keyword id="KW-0472">Membrane</keyword>
<keyword id="KW-1267">Proteomics identification</keyword>
<keyword id="KW-1185">Reference proteome</keyword>
<keyword id="KW-0812">Transmembrane</keyword>
<keyword id="KW-1133">Transmembrane helix</keyword>
<evidence type="ECO:0000255" key="1"/>
<evidence type="ECO:0000256" key="2">
    <source>
        <dbReference type="SAM" id="MobiDB-lite"/>
    </source>
</evidence>
<evidence type="ECO:0000303" key="3">
    <source>
    </source>
</evidence>
<evidence type="ECO:0000303" key="4">
    <source>
    </source>
</evidence>
<evidence type="ECO:0000303" key="5">
    <source>
    </source>
</evidence>
<evidence type="ECO:0000303" key="6">
    <source>
    </source>
</evidence>
<evidence type="ECO:0000305" key="7"/>
<evidence type="ECO:0000312" key="8">
    <source>
        <dbReference type="HGNC" id="HGNC:22999"/>
    </source>
</evidence>
<sequence length="1006" mass="114797">MSAYYRNNWSEEDPDYPDYSGSQNRTQGYLKTQGYPDVPGPLNNPDYPGTRSNPYSVASRTRPDYPGSLAEPNYPRSLSNPDYSGTRSNAYSAASRTSPDHPTSLPEPDYSEFQSHPYHRASSRQPDYPGSQRNPDFAGSSSSGNYAGSRTHPDHFGSLEPDYPGAQSNSDHPGPRANLNHPGSRKNLEHTSFRINPYADSLGKPDYPGADIQPNSPPFFGEPDYPSAEDNQNLPSTWREPDYSDAENGHDYGSSETPKMTRGVLSRTSSIQPSFRHRSDDPVGSLWGENDYPEGIEMASMEMANSYGHSLPGAPGSGYVNPAYVGESGPVHAYGNPPLSECDWHKSPQGQKLIASLIPMTSRDRIKAIRNQPRTMEEKRNLRKIVDKEKSKQTHRILQLNCCIQCLNSISRAYRRSKNSLSEILNSISLWQKTLKIIGGKFGTSVLSYFNFLRWLLKFNIFSFILNFSFIIIPQFTVAKKNTLQFTGLEFFTGVGYFRDTVMYYGFYTNSTIQHGNSGASYNMQLAYIFTIGACLTTCFFSLLFSMAKYFRNNFINPHIYSGGITKLIFCWDFTVTHEKAVKLKQKNLSTEIRENLSELRQENSKLTFNQLLTRFSAYMVAWVVSTGVAIACCAAVYYLAEYNLEFLKTHSNPGAVLLLPFVVSCINLAVPCIYSMFRLVERYEMPRHEVYVLLIRNIFLKISIIGILCYYWLNTVALSGEECWETLIGQDIYRLLLMDFVFSLVNSFLGEFLRRIIGMQLITSLGLQEFDIARNVLELIYAQTLVWIGIFFCPLLPFIQMIMLFIMFYSKNISLMMNFQPPSKAWRASQMMTFFIFLLFFPSFTGVLCTLAITIWRLKPSADCGPFRGLPLFIHSIYSWIDTLSTRPGYLWVVWIYRNLIGSVHFFFILTLIVLIITYLYWQITEGRKIMIRLLHEQIINEGKDKMFLIEKLIKLQDMEKKANPSSLVLERREVEQQGFLHLGEHDGSLDLRSRRSVQEGNPRA</sequence>
<proteinExistence type="evidence at protein level"/>
<protein>
    <recommendedName>
        <fullName>Transmembrane channel-like protein 5</fullName>
    </recommendedName>
</protein>
<name>TMC5_HUMAN</name>